<accession>B0RRZ3</accession>
<name>EX7L_XANCB</name>
<gene>
    <name evidence="1" type="primary">xseA</name>
    <name type="ordered locus">xcc-b100_1875</name>
</gene>
<sequence>MADRTEQILTPSQLNTLARDLLEGSFPLVWVEAELGNVTRPASGHLYFTLKDARAQIRCAMFKPKSTWLKFQPREGLRVLARGRLTLYEARGDYQLVLDHMEEAGEGALRRAFEELRARLAAEGVFDAERKQPLPAHVRRLAVITSPSGAAVRDVLSVLARRFPLLEVDILPSLVQGDSAAAQITSLLQRADASGRYDVILITRGGGSLEDLWAFNDERLARAIAAAHTPVVSAVGHETDVSLSDFAADVRAPTPSVAAELLVPDQRELVARVRRAQARLSQLQQHTLGQAMQHADRLALRLRARSPQARPQLLQRRQEDAARHLRARMQHILERLQARVQRAQAGVQSHSPQRHLAPLQQRLRAAHPQAAMQRRLQQDHLHLRGLVRSLEAVSPLATVARGYAIVTRQADGSVVRSAAELTQGDRLRAQLADGSVTVVVDTSETG</sequence>
<reference key="1">
    <citation type="journal article" date="2008" name="J. Biotechnol.">
        <title>The genome of Xanthomonas campestris pv. campestris B100 and its use for the reconstruction of metabolic pathways involved in xanthan biosynthesis.</title>
        <authorList>
            <person name="Vorhoelter F.-J."/>
            <person name="Schneiker S."/>
            <person name="Goesmann A."/>
            <person name="Krause L."/>
            <person name="Bekel T."/>
            <person name="Kaiser O."/>
            <person name="Linke B."/>
            <person name="Patschkowski T."/>
            <person name="Rueckert C."/>
            <person name="Schmid J."/>
            <person name="Sidhu V.K."/>
            <person name="Sieber V."/>
            <person name="Tauch A."/>
            <person name="Watt S.A."/>
            <person name="Weisshaar B."/>
            <person name="Becker A."/>
            <person name="Niehaus K."/>
            <person name="Puehler A."/>
        </authorList>
    </citation>
    <scope>NUCLEOTIDE SEQUENCE [LARGE SCALE GENOMIC DNA]</scope>
    <source>
        <strain>B100</strain>
    </source>
</reference>
<keyword id="KW-0963">Cytoplasm</keyword>
<keyword id="KW-0269">Exonuclease</keyword>
<keyword id="KW-0378">Hydrolase</keyword>
<keyword id="KW-0540">Nuclease</keyword>
<dbReference type="EC" id="3.1.11.6" evidence="1"/>
<dbReference type="EMBL" id="AM920689">
    <property type="protein sequence ID" value="CAP51228.1"/>
    <property type="molecule type" value="Genomic_DNA"/>
</dbReference>
<dbReference type="SMR" id="B0RRZ3"/>
<dbReference type="KEGG" id="xca:xcc-b100_1875"/>
<dbReference type="HOGENOM" id="CLU_023625_3_1_6"/>
<dbReference type="Proteomes" id="UP000001188">
    <property type="component" value="Chromosome"/>
</dbReference>
<dbReference type="GO" id="GO:0005737">
    <property type="term" value="C:cytoplasm"/>
    <property type="evidence" value="ECO:0007669"/>
    <property type="project" value="UniProtKB-SubCell"/>
</dbReference>
<dbReference type="GO" id="GO:0009318">
    <property type="term" value="C:exodeoxyribonuclease VII complex"/>
    <property type="evidence" value="ECO:0007669"/>
    <property type="project" value="InterPro"/>
</dbReference>
<dbReference type="GO" id="GO:0008855">
    <property type="term" value="F:exodeoxyribonuclease VII activity"/>
    <property type="evidence" value="ECO:0007669"/>
    <property type="project" value="UniProtKB-UniRule"/>
</dbReference>
<dbReference type="GO" id="GO:0003676">
    <property type="term" value="F:nucleic acid binding"/>
    <property type="evidence" value="ECO:0007669"/>
    <property type="project" value="InterPro"/>
</dbReference>
<dbReference type="GO" id="GO:0006308">
    <property type="term" value="P:DNA catabolic process"/>
    <property type="evidence" value="ECO:0007669"/>
    <property type="project" value="UniProtKB-UniRule"/>
</dbReference>
<dbReference type="CDD" id="cd04489">
    <property type="entry name" value="ExoVII_LU_OBF"/>
    <property type="match status" value="1"/>
</dbReference>
<dbReference type="HAMAP" id="MF_00378">
    <property type="entry name" value="Exonuc_7_L"/>
    <property type="match status" value="1"/>
</dbReference>
<dbReference type="InterPro" id="IPR003753">
    <property type="entry name" value="Exonuc_VII_L"/>
</dbReference>
<dbReference type="InterPro" id="IPR020579">
    <property type="entry name" value="Exonuc_VII_lsu_C"/>
</dbReference>
<dbReference type="InterPro" id="IPR025824">
    <property type="entry name" value="OB-fold_nuc-bd_dom"/>
</dbReference>
<dbReference type="NCBIfam" id="TIGR00237">
    <property type="entry name" value="xseA"/>
    <property type="match status" value="1"/>
</dbReference>
<dbReference type="PANTHER" id="PTHR30008">
    <property type="entry name" value="EXODEOXYRIBONUCLEASE 7 LARGE SUBUNIT"/>
    <property type="match status" value="1"/>
</dbReference>
<dbReference type="PANTHER" id="PTHR30008:SF0">
    <property type="entry name" value="EXODEOXYRIBONUCLEASE 7 LARGE SUBUNIT"/>
    <property type="match status" value="1"/>
</dbReference>
<dbReference type="Pfam" id="PF02601">
    <property type="entry name" value="Exonuc_VII_L"/>
    <property type="match status" value="1"/>
</dbReference>
<dbReference type="Pfam" id="PF13742">
    <property type="entry name" value="tRNA_anti_2"/>
    <property type="match status" value="1"/>
</dbReference>
<organism>
    <name type="scientific">Xanthomonas campestris pv. campestris (strain B100)</name>
    <dbReference type="NCBI Taxonomy" id="509169"/>
    <lineage>
        <taxon>Bacteria</taxon>
        <taxon>Pseudomonadati</taxon>
        <taxon>Pseudomonadota</taxon>
        <taxon>Gammaproteobacteria</taxon>
        <taxon>Lysobacterales</taxon>
        <taxon>Lysobacteraceae</taxon>
        <taxon>Xanthomonas</taxon>
    </lineage>
</organism>
<comment type="function">
    <text evidence="1">Bidirectionally degrades single-stranded DNA into large acid-insoluble oligonucleotides, which are then degraded further into small acid-soluble oligonucleotides.</text>
</comment>
<comment type="catalytic activity">
    <reaction evidence="1">
        <text>Exonucleolytic cleavage in either 5'- to 3'- or 3'- to 5'-direction to yield nucleoside 5'-phosphates.</text>
        <dbReference type="EC" id="3.1.11.6"/>
    </reaction>
</comment>
<comment type="subunit">
    <text evidence="1">Heterooligomer composed of large and small subunits.</text>
</comment>
<comment type="subcellular location">
    <subcellularLocation>
        <location evidence="1">Cytoplasm</location>
    </subcellularLocation>
</comment>
<comment type="similarity">
    <text evidence="1">Belongs to the XseA family.</text>
</comment>
<evidence type="ECO:0000255" key="1">
    <source>
        <dbReference type="HAMAP-Rule" id="MF_00378"/>
    </source>
</evidence>
<proteinExistence type="inferred from homology"/>
<protein>
    <recommendedName>
        <fullName evidence="1">Exodeoxyribonuclease 7 large subunit</fullName>
        <ecNumber evidence="1">3.1.11.6</ecNumber>
    </recommendedName>
    <alternativeName>
        <fullName evidence="1">Exodeoxyribonuclease VII large subunit</fullName>
        <shortName evidence="1">Exonuclease VII large subunit</shortName>
    </alternativeName>
</protein>
<feature type="chain" id="PRO_1000122101" description="Exodeoxyribonuclease 7 large subunit">
    <location>
        <begin position="1"/>
        <end position="446"/>
    </location>
</feature>